<accession>Q8BVR0</accession>
<gene>
    <name type="primary">Banf2</name>
    <name type="synonym">Bafl</name>
</gene>
<proteinExistence type="evidence at protein level"/>
<comment type="function">
    <text evidence="1">May play a role in BANF1 regulation and influence tissue-specific roles of BANF1.</text>
</comment>
<comment type="subunit">
    <text evidence="1">Homodimer. Heterodimerizes with BANF1 (By similarity).</text>
</comment>
<comment type="subcellular location">
    <subcellularLocation>
        <location>Nucleus</location>
    </subcellularLocation>
    <subcellularLocation>
        <location evidence="1">Cytoplasm</location>
    </subcellularLocation>
</comment>
<name>BAFL_MOUSE</name>
<feature type="chain" id="PRO_0000223617" description="Barrier-to-autointegration factor-like protein">
    <location>
        <begin position="1"/>
        <end position="90"/>
    </location>
</feature>
<sequence>MDDMSPRLRAFLSEPIGEKDVAWVDGISRELAINLVTKGFNKAYVLLGQFLLMHKNEAEFQRWIICCCGATECEARQSSTCLKEWCSCFL</sequence>
<organism>
    <name type="scientific">Mus musculus</name>
    <name type="common">Mouse</name>
    <dbReference type="NCBI Taxonomy" id="10090"/>
    <lineage>
        <taxon>Eukaryota</taxon>
        <taxon>Metazoa</taxon>
        <taxon>Chordata</taxon>
        <taxon>Craniata</taxon>
        <taxon>Vertebrata</taxon>
        <taxon>Euteleostomi</taxon>
        <taxon>Mammalia</taxon>
        <taxon>Eutheria</taxon>
        <taxon>Euarchontoglires</taxon>
        <taxon>Glires</taxon>
        <taxon>Rodentia</taxon>
        <taxon>Myomorpha</taxon>
        <taxon>Muroidea</taxon>
        <taxon>Muridae</taxon>
        <taxon>Murinae</taxon>
        <taxon>Mus</taxon>
        <taxon>Mus</taxon>
    </lineage>
</organism>
<reference key="1">
    <citation type="journal article" date="2005" name="Science">
        <title>The transcriptional landscape of the mammalian genome.</title>
        <authorList>
            <person name="Carninci P."/>
            <person name="Kasukawa T."/>
            <person name="Katayama S."/>
            <person name="Gough J."/>
            <person name="Frith M.C."/>
            <person name="Maeda N."/>
            <person name="Oyama R."/>
            <person name="Ravasi T."/>
            <person name="Lenhard B."/>
            <person name="Wells C."/>
            <person name="Kodzius R."/>
            <person name="Shimokawa K."/>
            <person name="Bajic V.B."/>
            <person name="Brenner S.E."/>
            <person name="Batalov S."/>
            <person name="Forrest A.R."/>
            <person name="Zavolan M."/>
            <person name="Davis M.J."/>
            <person name="Wilming L.G."/>
            <person name="Aidinis V."/>
            <person name="Allen J.E."/>
            <person name="Ambesi-Impiombato A."/>
            <person name="Apweiler R."/>
            <person name="Aturaliya R.N."/>
            <person name="Bailey T.L."/>
            <person name="Bansal M."/>
            <person name="Baxter L."/>
            <person name="Beisel K.W."/>
            <person name="Bersano T."/>
            <person name="Bono H."/>
            <person name="Chalk A.M."/>
            <person name="Chiu K.P."/>
            <person name="Choudhary V."/>
            <person name="Christoffels A."/>
            <person name="Clutterbuck D.R."/>
            <person name="Crowe M.L."/>
            <person name="Dalla E."/>
            <person name="Dalrymple B.P."/>
            <person name="de Bono B."/>
            <person name="Della Gatta G."/>
            <person name="di Bernardo D."/>
            <person name="Down T."/>
            <person name="Engstrom P."/>
            <person name="Fagiolini M."/>
            <person name="Faulkner G."/>
            <person name="Fletcher C.F."/>
            <person name="Fukushima T."/>
            <person name="Furuno M."/>
            <person name="Futaki S."/>
            <person name="Gariboldi M."/>
            <person name="Georgii-Hemming P."/>
            <person name="Gingeras T.R."/>
            <person name="Gojobori T."/>
            <person name="Green R.E."/>
            <person name="Gustincich S."/>
            <person name="Harbers M."/>
            <person name="Hayashi Y."/>
            <person name="Hensch T.K."/>
            <person name="Hirokawa N."/>
            <person name="Hill D."/>
            <person name="Huminiecki L."/>
            <person name="Iacono M."/>
            <person name="Ikeo K."/>
            <person name="Iwama A."/>
            <person name="Ishikawa T."/>
            <person name="Jakt M."/>
            <person name="Kanapin A."/>
            <person name="Katoh M."/>
            <person name="Kawasawa Y."/>
            <person name="Kelso J."/>
            <person name="Kitamura H."/>
            <person name="Kitano H."/>
            <person name="Kollias G."/>
            <person name="Krishnan S.P."/>
            <person name="Kruger A."/>
            <person name="Kummerfeld S.K."/>
            <person name="Kurochkin I.V."/>
            <person name="Lareau L.F."/>
            <person name="Lazarevic D."/>
            <person name="Lipovich L."/>
            <person name="Liu J."/>
            <person name="Liuni S."/>
            <person name="McWilliam S."/>
            <person name="Madan Babu M."/>
            <person name="Madera M."/>
            <person name="Marchionni L."/>
            <person name="Matsuda H."/>
            <person name="Matsuzawa S."/>
            <person name="Miki H."/>
            <person name="Mignone F."/>
            <person name="Miyake S."/>
            <person name="Morris K."/>
            <person name="Mottagui-Tabar S."/>
            <person name="Mulder N."/>
            <person name="Nakano N."/>
            <person name="Nakauchi H."/>
            <person name="Ng P."/>
            <person name="Nilsson R."/>
            <person name="Nishiguchi S."/>
            <person name="Nishikawa S."/>
            <person name="Nori F."/>
            <person name="Ohara O."/>
            <person name="Okazaki Y."/>
            <person name="Orlando V."/>
            <person name="Pang K.C."/>
            <person name="Pavan W.J."/>
            <person name="Pavesi G."/>
            <person name="Pesole G."/>
            <person name="Petrovsky N."/>
            <person name="Piazza S."/>
            <person name="Reed J."/>
            <person name="Reid J.F."/>
            <person name="Ring B.Z."/>
            <person name="Ringwald M."/>
            <person name="Rost B."/>
            <person name="Ruan Y."/>
            <person name="Salzberg S.L."/>
            <person name="Sandelin A."/>
            <person name="Schneider C."/>
            <person name="Schoenbach C."/>
            <person name="Sekiguchi K."/>
            <person name="Semple C.A."/>
            <person name="Seno S."/>
            <person name="Sessa L."/>
            <person name="Sheng Y."/>
            <person name="Shibata Y."/>
            <person name="Shimada H."/>
            <person name="Shimada K."/>
            <person name="Silva D."/>
            <person name="Sinclair B."/>
            <person name="Sperling S."/>
            <person name="Stupka E."/>
            <person name="Sugiura K."/>
            <person name="Sultana R."/>
            <person name="Takenaka Y."/>
            <person name="Taki K."/>
            <person name="Tammoja K."/>
            <person name="Tan S.L."/>
            <person name="Tang S."/>
            <person name="Taylor M.S."/>
            <person name="Tegner J."/>
            <person name="Teichmann S.A."/>
            <person name="Ueda H.R."/>
            <person name="van Nimwegen E."/>
            <person name="Verardo R."/>
            <person name="Wei C.L."/>
            <person name="Yagi K."/>
            <person name="Yamanishi H."/>
            <person name="Zabarovsky E."/>
            <person name="Zhu S."/>
            <person name="Zimmer A."/>
            <person name="Hide W."/>
            <person name="Bult C."/>
            <person name="Grimmond S.M."/>
            <person name="Teasdale R.D."/>
            <person name="Liu E.T."/>
            <person name="Brusic V."/>
            <person name="Quackenbush J."/>
            <person name="Wahlestedt C."/>
            <person name="Mattick J.S."/>
            <person name="Hume D.A."/>
            <person name="Kai C."/>
            <person name="Sasaki D."/>
            <person name="Tomaru Y."/>
            <person name="Fukuda S."/>
            <person name="Kanamori-Katayama M."/>
            <person name="Suzuki M."/>
            <person name="Aoki J."/>
            <person name="Arakawa T."/>
            <person name="Iida J."/>
            <person name="Imamura K."/>
            <person name="Itoh M."/>
            <person name="Kato T."/>
            <person name="Kawaji H."/>
            <person name="Kawagashira N."/>
            <person name="Kawashima T."/>
            <person name="Kojima M."/>
            <person name="Kondo S."/>
            <person name="Konno H."/>
            <person name="Nakano K."/>
            <person name="Ninomiya N."/>
            <person name="Nishio T."/>
            <person name="Okada M."/>
            <person name="Plessy C."/>
            <person name="Shibata K."/>
            <person name="Shiraki T."/>
            <person name="Suzuki S."/>
            <person name="Tagami M."/>
            <person name="Waki K."/>
            <person name="Watahiki A."/>
            <person name="Okamura-Oho Y."/>
            <person name="Suzuki H."/>
            <person name="Kawai J."/>
            <person name="Hayashizaki Y."/>
        </authorList>
    </citation>
    <scope>NUCLEOTIDE SEQUENCE [LARGE SCALE MRNA]</scope>
    <source>
        <strain>C57BL/6J</strain>
        <tissue>Testis</tissue>
    </source>
</reference>
<reference key="2">
    <citation type="journal article" date="2004" name="Genome Res.">
        <title>The status, quality, and expansion of the NIH full-length cDNA project: the Mammalian Gene Collection (MGC).</title>
        <authorList>
            <consortium name="The MGC Project Team"/>
        </authorList>
    </citation>
    <scope>NUCLEOTIDE SEQUENCE [LARGE SCALE MRNA]</scope>
    <source>
        <tissue>Testis</tissue>
    </source>
</reference>
<reference key="3">
    <citation type="journal article" date="2010" name="Cell">
        <title>A tissue-specific atlas of mouse protein phosphorylation and expression.</title>
        <authorList>
            <person name="Huttlin E.L."/>
            <person name="Jedrychowski M.P."/>
            <person name="Elias J.E."/>
            <person name="Goswami T."/>
            <person name="Rad R."/>
            <person name="Beausoleil S.A."/>
            <person name="Villen J."/>
            <person name="Haas W."/>
            <person name="Sowa M.E."/>
            <person name="Gygi S.P."/>
        </authorList>
    </citation>
    <scope>IDENTIFICATION BY MASS SPECTROMETRY [LARGE SCALE ANALYSIS]</scope>
    <source>
        <tissue>Testis</tissue>
    </source>
</reference>
<protein>
    <recommendedName>
        <fullName>Barrier-to-autointegration factor-like protein</fullName>
        <shortName>BAF-L</shortName>
    </recommendedName>
    <alternativeName>
        <fullName>Barrier-to-autointegration factor 2</fullName>
    </alternativeName>
</protein>
<evidence type="ECO:0000250" key="1"/>
<keyword id="KW-0963">Cytoplasm</keyword>
<keyword id="KW-0539">Nucleus</keyword>
<keyword id="KW-1185">Reference proteome</keyword>
<dbReference type="EMBL" id="AK076863">
    <property type="protein sequence ID" value="BAC36510.1"/>
    <property type="molecule type" value="mRNA"/>
</dbReference>
<dbReference type="EMBL" id="BC049628">
    <property type="protein sequence ID" value="AAH49628.1"/>
    <property type="molecule type" value="mRNA"/>
</dbReference>
<dbReference type="CCDS" id="CCDS16813.1"/>
<dbReference type="RefSeq" id="NP_001038215.1">
    <property type="nucleotide sequence ID" value="NM_001044750.1"/>
</dbReference>
<dbReference type="RefSeq" id="NP_997158.1">
    <property type="nucleotide sequence ID" value="NM_207275.2"/>
</dbReference>
<dbReference type="SMR" id="Q8BVR0"/>
<dbReference type="FunCoup" id="Q8BVR0">
    <property type="interactions" value="19"/>
</dbReference>
<dbReference type="STRING" id="10090.ENSMUSP00000046219"/>
<dbReference type="PhosphoSitePlus" id="Q8BVR0"/>
<dbReference type="SwissPalm" id="Q8BVR0"/>
<dbReference type="PaxDb" id="10090-ENSMUSP00000046219"/>
<dbReference type="ProteomicsDB" id="265198"/>
<dbReference type="Antibodypedia" id="48602">
    <property type="antibodies" value="19 antibodies from 9 providers"/>
</dbReference>
<dbReference type="DNASU" id="403171"/>
<dbReference type="Ensembl" id="ENSMUST00000037722.9">
    <property type="protein sequence ID" value="ENSMUSP00000046219.3"/>
    <property type="gene ID" value="ENSMUSG00000037307.12"/>
</dbReference>
<dbReference type="Ensembl" id="ENSMUST00000110032.2">
    <property type="protein sequence ID" value="ENSMUSP00000105659.2"/>
    <property type="gene ID" value="ENSMUSG00000037307.12"/>
</dbReference>
<dbReference type="GeneID" id="403171"/>
<dbReference type="KEGG" id="mmu:403171"/>
<dbReference type="UCSC" id="uc008mqn.1">
    <property type="organism name" value="mouse"/>
</dbReference>
<dbReference type="AGR" id="MGI:2684961"/>
<dbReference type="CTD" id="140836"/>
<dbReference type="MGI" id="MGI:2684961">
    <property type="gene designation" value="Banf2"/>
</dbReference>
<dbReference type="VEuPathDB" id="HostDB:ENSMUSG00000037307"/>
<dbReference type="eggNOG" id="KOG4233">
    <property type="taxonomic scope" value="Eukaryota"/>
</dbReference>
<dbReference type="GeneTree" id="ENSGT00940000162003"/>
<dbReference type="HOGENOM" id="CLU_167806_0_0_1"/>
<dbReference type="InParanoid" id="Q8BVR0"/>
<dbReference type="OMA" id="KWIICCC"/>
<dbReference type="OrthoDB" id="9997163at2759"/>
<dbReference type="PhylomeDB" id="Q8BVR0"/>
<dbReference type="TreeFam" id="TF315060"/>
<dbReference type="BioGRID-ORCS" id="403171">
    <property type="hits" value="2 hits in 62 CRISPR screens"/>
</dbReference>
<dbReference type="ChiTaRS" id="Banf2">
    <property type="organism name" value="mouse"/>
</dbReference>
<dbReference type="PRO" id="PR:Q8BVR0"/>
<dbReference type="Proteomes" id="UP000000589">
    <property type="component" value="Chromosome 2"/>
</dbReference>
<dbReference type="RNAct" id="Q8BVR0">
    <property type="molecule type" value="protein"/>
</dbReference>
<dbReference type="Bgee" id="ENSMUSG00000037307">
    <property type="expression patterns" value="Expressed in seminiferous tubule of testis and 12 other cell types or tissues"/>
</dbReference>
<dbReference type="GO" id="GO:0005737">
    <property type="term" value="C:cytoplasm"/>
    <property type="evidence" value="ECO:0007669"/>
    <property type="project" value="UniProtKB-SubCell"/>
</dbReference>
<dbReference type="GO" id="GO:0005634">
    <property type="term" value="C:nucleus"/>
    <property type="evidence" value="ECO:0007669"/>
    <property type="project" value="UniProtKB-SubCell"/>
</dbReference>
<dbReference type="GO" id="GO:0003677">
    <property type="term" value="F:DNA binding"/>
    <property type="evidence" value="ECO:0007669"/>
    <property type="project" value="InterPro"/>
</dbReference>
<dbReference type="FunFam" id="1.10.150.40:FF:000002">
    <property type="entry name" value="Barrier to autointegration factor 2"/>
    <property type="match status" value="1"/>
</dbReference>
<dbReference type="Gene3D" id="1.10.150.40">
    <property type="entry name" value="Barrier-to-autointegration factor, BAF"/>
    <property type="match status" value="1"/>
</dbReference>
<dbReference type="InterPro" id="IPR051387">
    <property type="entry name" value="BAF"/>
</dbReference>
<dbReference type="InterPro" id="IPR004122">
    <property type="entry name" value="BAF_prot"/>
</dbReference>
<dbReference type="InterPro" id="IPR036617">
    <property type="entry name" value="BAF_sf"/>
</dbReference>
<dbReference type="PANTHER" id="PTHR47507">
    <property type="entry name" value="BARRIER TO AUTOINTEGRATION FACTOR 2"/>
    <property type="match status" value="1"/>
</dbReference>
<dbReference type="PANTHER" id="PTHR47507:SF4">
    <property type="entry name" value="BARRIER-TO-AUTOINTEGRATION FACTOR-LIKE PROTEIN"/>
    <property type="match status" value="1"/>
</dbReference>
<dbReference type="Pfam" id="PF02961">
    <property type="entry name" value="SAM_BAF"/>
    <property type="match status" value="1"/>
</dbReference>
<dbReference type="SMART" id="SM01023">
    <property type="entry name" value="BAF"/>
    <property type="match status" value="1"/>
</dbReference>
<dbReference type="SUPFAM" id="SSF47798">
    <property type="entry name" value="Barrier-to-autointegration factor, BAF"/>
    <property type="match status" value="1"/>
</dbReference>